<feature type="chain" id="PRO_0000313416" description="DNA ligase">
    <location>
        <begin position="1"/>
        <end position="727"/>
    </location>
</feature>
<feature type="domain" description="BRCT" evidence="1">
    <location>
        <begin position="636"/>
        <end position="725"/>
    </location>
</feature>
<feature type="active site" description="N6-AMP-lysine intermediate" evidence="1">
    <location>
        <position position="152"/>
    </location>
</feature>
<feature type="binding site" evidence="1">
    <location>
        <begin position="71"/>
        <end position="75"/>
    </location>
    <ligand>
        <name>NAD(+)</name>
        <dbReference type="ChEBI" id="CHEBI:57540"/>
    </ligand>
</feature>
<feature type="binding site" evidence="1">
    <location>
        <begin position="120"/>
        <end position="121"/>
    </location>
    <ligand>
        <name>NAD(+)</name>
        <dbReference type="ChEBI" id="CHEBI:57540"/>
    </ligand>
</feature>
<feature type="binding site" evidence="1">
    <location>
        <position position="150"/>
    </location>
    <ligand>
        <name>NAD(+)</name>
        <dbReference type="ChEBI" id="CHEBI:57540"/>
    </ligand>
</feature>
<feature type="binding site" evidence="1">
    <location>
        <position position="173"/>
    </location>
    <ligand>
        <name>NAD(+)</name>
        <dbReference type="ChEBI" id="CHEBI:57540"/>
    </ligand>
</feature>
<feature type="binding site" evidence="1">
    <location>
        <position position="213"/>
    </location>
    <ligand>
        <name>NAD(+)</name>
        <dbReference type="ChEBI" id="CHEBI:57540"/>
    </ligand>
</feature>
<feature type="binding site" evidence="1">
    <location>
        <position position="329"/>
    </location>
    <ligand>
        <name>NAD(+)</name>
        <dbReference type="ChEBI" id="CHEBI:57540"/>
    </ligand>
</feature>
<feature type="binding site" evidence="1">
    <location>
        <position position="353"/>
    </location>
    <ligand>
        <name>NAD(+)</name>
        <dbReference type="ChEBI" id="CHEBI:57540"/>
    </ligand>
</feature>
<feature type="binding site" evidence="1">
    <location>
        <position position="447"/>
    </location>
    <ligand>
        <name>Zn(2+)</name>
        <dbReference type="ChEBI" id="CHEBI:29105"/>
    </ligand>
</feature>
<feature type="binding site" evidence="1">
    <location>
        <position position="450"/>
    </location>
    <ligand>
        <name>Zn(2+)</name>
        <dbReference type="ChEBI" id="CHEBI:29105"/>
    </ligand>
</feature>
<feature type="binding site" evidence="1">
    <location>
        <position position="466"/>
    </location>
    <ligand>
        <name>Zn(2+)</name>
        <dbReference type="ChEBI" id="CHEBI:29105"/>
    </ligand>
</feature>
<feature type="binding site" evidence="1">
    <location>
        <position position="472"/>
    </location>
    <ligand>
        <name>Zn(2+)</name>
        <dbReference type="ChEBI" id="CHEBI:29105"/>
    </ligand>
</feature>
<sequence>MTSNDPADPADRAEFDDAAVAGMTSEAEAGATAEGVEDVPAGVRERYADLVEQVRAHQFRYYVLDSPTISDGEFDELFTELQTLESDHPALRDPDSPTQVVGGTFSTDFTAVDHLERMLSLDNAFDPDELRAWVERVEREVGSSAHYLCELKIDGLAINLLYRDGKLERALTRGDGRTGEDVTLNVRTMDDVPDQLTGTDEYPVPALVEIRGEVFFRVDEFAQLNASLVEAGKPPFANPRNSAAGSLRQKDPRVTKSRPLRMICHGLGKREGFEPKQQSESYAALRAWGLRVSPHTKVLSTVDEVLEHIDYWGKHRNSAEHEIDGVVVKVDEVSLQRRLGATSRAPRWSIAYKYPPEQATTRLLDIQVAVGRTGRVTPYAVMEPVKVAGSTVARATLHNADQVRHKGVLIGDRVVIRKAGDVIPEVLGPVVDVRDGSEREFVMPTECPDCGTALAHQKEGDVDLRCPNSHNCIGQRRERLFQLAGRKAFDIEVLGYEGVSALLSAGVVFDEGDLFDLNEEALLKTTLFRTDDGSLSVNGGKLLANLESAKQQPLWRVLVALSIRHVGPIAARVLAREFGSLDRIQEASEEELAAGEGVGPTIATAVREWFDVDWHREIVRKWSEAGVRMADERDESIERHLTGLSIVVTGSLEGFSRDEAKELIMARGGRAAGSVSKKTAFVVVGESPGSKYDKAVQMKVPVLDEDGFRVLLEQGPEAAAEAALPAE</sequence>
<name>DNLJ_SACEN</name>
<accession>A4FMS5</accession>
<protein>
    <recommendedName>
        <fullName evidence="1">DNA ligase</fullName>
        <ecNumber evidence="1">6.5.1.2</ecNumber>
    </recommendedName>
    <alternativeName>
        <fullName evidence="1">Polydeoxyribonucleotide synthase [NAD(+)]</fullName>
    </alternativeName>
</protein>
<evidence type="ECO:0000255" key="1">
    <source>
        <dbReference type="HAMAP-Rule" id="MF_01588"/>
    </source>
</evidence>
<reference key="1">
    <citation type="journal article" date="2007" name="Nat. Biotechnol.">
        <title>Complete genome sequence of the erythromycin-producing bacterium Saccharopolyspora erythraea NRRL23338.</title>
        <authorList>
            <person name="Oliynyk M."/>
            <person name="Samborskyy M."/>
            <person name="Lester J.B."/>
            <person name="Mironenko T."/>
            <person name="Scott N."/>
            <person name="Dickens S."/>
            <person name="Haydock S.F."/>
            <person name="Leadlay P.F."/>
        </authorList>
    </citation>
    <scope>NUCLEOTIDE SEQUENCE [LARGE SCALE GENOMIC DNA]</scope>
    <source>
        <strain>ATCC 11635 / DSM 40517 / JCM 4748 / NBRC 13426 / NCIMB 8594 / NRRL 2338</strain>
    </source>
</reference>
<keyword id="KW-0227">DNA damage</keyword>
<keyword id="KW-0234">DNA repair</keyword>
<keyword id="KW-0235">DNA replication</keyword>
<keyword id="KW-0436">Ligase</keyword>
<keyword id="KW-0460">Magnesium</keyword>
<keyword id="KW-0464">Manganese</keyword>
<keyword id="KW-0479">Metal-binding</keyword>
<keyword id="KW-0520">NAD</keyword>
<keyword id="KW-1185">Reference proteome</keyword>
<keyword id="KW-0862">Zinc</keyword>
<comment type="function">
    <text evidence="1">DNA ligase that catalyzes the formation of phosphodiester linkages between 5'-phosphoryl and 3'-hydroxyl groups in double-stranded DNA using NAD as a coenzyme and as the energy source for the reaction. It is essential for DNA replication and repair of damaged DNA.</text>
</comment>
<comment type="catalytic activity">
    <reaction evidence="1">
        <text>NAD(+) + (deoxyribonucleotide)n-3'-hydroxyl + 5'-phospho-(deoxyribonucleotide)m = (deoxyribonucleotide)n+m + AMP + beta-nicotinamide D-nucleotide.</text>
        <dbReference type="EC" id="6.5.1.2"/>
    </reaction>
</comment>
<comment type="cofactor">
    <cofactor evidence="1">
        <name>Mg(2+)</name>
        <dbReference type="ChEBI" id="CHEBI:18420"/>
    </cofactor>
    <cofactor evidence="1">
        <name>Mn(2+)</name>
        <dbReference type="ChEBI" id="CHEBI:29035"/>
    </cofactor>
</comment>
<comment type="similarity">
    <text evidence="1">Belongs to the NAD-dependent DNA ligase family. LigA subfamily.</text>
</comment>
<dbReference type="EC" id="6.5.1.2" evidence="1"/>
<dbReference type="EMBL" id="AM420293">
    <property type="protein sequence ID" value="CAM05350.1"/>
    <property type="molecule type" value="Genomic_DNA"/>
</dbReference>
<dbReference type="RefSeq" id="WP_009944378.1">
    <property type="nucleotide sequence ID" value="NC_009142.1"/>
</dbReference>
<dbReference type="SMR" id="A4FMS5"/>
<dbReference type="STRING" id="405948.SACE_6177"/>
<dbReference type="KEGG" id="sen:SACE_6177"/>
<dbReference type="eggNOG" id="COG0272">
    <property type="taxonomic scope" value="Bacteria"/>
</dbReference>
<dbReference type="HOGENOM" id="CLU_007764_2_1_11"/>
<dbReference type="OrthoDB" id="9759736at2"/>
<dbReference type="Proteomes" id="UP000006728">
    <property type="component" value="Chromosome"/>
</dbReference>
<dbReference type="GO" id="GO:0005829">
    <property type="term" value="C:cytosol"/>
    <property type="evidence" value="ECO:0007669"/>
    <property type="project" value="TreeGrafter"/>
</dbReference>
<dbReference type="GO" id="GO:0003911">
    <property type="term" value="F:DNA ligase (NAD+) activity"/>
    <property type="evidence" value="ECO:0007669"/>
    <property type="project" value="UniProtKB-UniRule"/>
</dbReference>
<dbReference type="GO" id="GO:0046872">
    <property type="term" value="F:metal ion binding"/>
    <property type="evidence" value="ECO:0007669"/>
    <property type="project" value="UniProtKB-KW"/>
</dbReference>
<dbReference type="GO" id="GO:0006281">
    <property type="term" value="P:DNA repair"/>
    <property type="evidence" value="ECO:0007669"/>
    <property type="project" value="UniProtKB-KW"/>
</dbReference>
<dbReference type="GO" id="GO:0006260">
    <property type="term" value="P:DNA replication"/>
    <property type="evidence" value="ECO:0007669"/>
    <property type="project" value="UniProtKB-KW"/>
</dbReference>
<dbReference type="CDD" id="cd00114">
    <property type="entry name" value="LIGANc"/>
    <property type="match status" value="1"/>
</dbReference>
<dbReference type="FunFam" id="1.10.150.20:FF:000006">
    <property type="entry name" value="DNA ligase"/>
    <property type="match status" value="1"/>
</dbReference>
<dbReference type="FunFam" id="2.40.50.140:FF:000012">
    <property type="entry name" value="DNA ligase"/>
    <property type="match status" value="1"/>
</dbReference>
<dbReference type="FunFam" id="3.30.470.30:FF:000001">
    <property type="entry name" value="DNA ligase"/>
    <property type="match status" value="1"/>
</dbReference>
<dbReference type="FunFam" id="3.40.50.10190:FF:000054">
    <property type="entry name" value="DNA ligase"/>
    <property type="match status" value="1"/>
</dbReference>
<dbReference type="Gene3D" id="6.20.10.30">
    <property type="match status" value="1"/>
</dbReference>
<dbReference type="Gene3D" id="1.10.150.20">
    <property type="entry name" value="5' to 3' exonuclease, C-terminal subdomain"/>
    <property type="match status" value="2"/>
</dbReference>
<dbReference type="Gene3D" id="3.40.50.10190">
    <property type="entry name" value="BRCT domain"/>
    <property type="match status" value="1"/>
</dbReference>
<dbReference type="Gene3D" id="3.30.470.30">
    <property type="entry name" value="DNA ligase/mRNA capping enzyme"/>
    <property type="match status" value="1"/>
</dbReference>
<dbReference type="Gene3D" id="1.10.287.610">
    <property type="entry name" value="Helix hairpin bin"/>
    <property type="match status" value="1"/>
</dbReference>
<dbReference type="Gene3D" id="2.40.50.140">
    <property type="entry name" value="Nucleic acid-binding proteins"/>
    <property type="match status" value="1"/>
</dbReference>
<dbReference type="HAMAP" id="MF_01588">
    <property type="entry name" value="DNA_ligase_A"/>
    <property type="match status" value="1"/>
</dbReference>
<dbReference type="InterPro" id="IPR001357">
    <property type="entry name" value="BRCT_dom"/>
</dbReference>
<dbReference type="InterPro" id="IPR036420">
    <property type="entry name" value="BRCT_dom_sf"/>
</dbReference>
<dbReference type="InterPro" id="IPR041663">
    <property type="entry name" value="DisA/LigA_HHH"/>
</dbReference>
<dbReference type="InterPro" id="IPR001679">
    <property type="entry name" value="DNA_ligase"/>
</dbReference>
<dbReference type="InterPro" id="IPR018239">
    <property type="entry name" value="DNA_ligase_AS"/>
</dbReference>
<dbReference type="InterPro" id="IPR033136">
    <property type="entry name" value="DNA_ligase_CS"/>
</dbReference>
<dbReference type="InterPro" id="IPR013839">
    <property type="entry name" value="DNAligase_adenylation"/>
</dbReference>
<dbReference type="InterPro" id="IPR013840">
    <property type="entry name" value="DNAligase_N"/>
</dbReference>
<dbReference type="InterPro" id="IPR012340">
    <property type="entry name" value="NA-bd_OB-fold"/>
</dbReference>
<dbReference type="InterPro" id="IPR004150">
    <property type="entry name" value="NAD_DNA_ligase_OB"/>
</dbReference>
<dbReference type="InterPro" id="IPR010994">
    <property type="entry name" value="RuvA_2-like"/>
</dbReference>
<dbReference type="InterPro" id="IPR004149">
    <property type="entry name" value="Znf_DNAligase_C4"/>
</dbReference>
<dbReference type="NCBIfam" id="TIGR00575">
    <property type="entry name" value="dnlj"/>
    <property type="match status" value="1"/>
</dbReference>
<dbReference type="NCBIfam" id="NF005932">
    <property type="entry name" value="PRK07956.1"/>
    <property type="match status" value="1"/>
</dbReference>
<dbReference type="PANTHER" id="PTHR23389">
    <property type="entry name" value="CHROMOSOME TRANSMISSION FIDELITY FACTOR 18"/>
    <property type="match status" value="1"/>
</dbReference>
<dbReference type="PANTHER" id="PTHR23389:SF9">
    <property type="entry name" value="DNA LIGASE"/>
    <property type="match status" value="1"/>
</dbReference>
<dbReference type="Pfam" id="PF00533">
    <property type="entry name" value="BRCT"/>
    <property type="match status" value="1"/>
</dbReference>
<dbReference type="Pfam" id="PF01653">
    <property type="entry name" value="DNA_ligase_aden"/>
    <property type="match status" value="1"/>
</dbReference>
<dbReference type="Pfam" id="PF03120">
    <property type="entry name" value="DNA_ligase_OB"/>
    <property type="match status" value="1"/>
</dbReference>
<dbReference type="Pfam" id="PF03119">
    <property type="entry name" value="DNA_ligase_ZBD"/>
    <property type="match status" value="1"/>
</dbReference>
<dbReference type="Pfam" id="PF12826">
    <property type="entry name" value="HHH_2"/>
    <property type="match status" value="1"/>
</dbReference>
<dbReference type="Pfam" id="PF22745">
    <property type="entry name" value="Nlig-Ia"/>
    <property type="match status" value="1"/>
</dbReference>
<dbReference type="PIRSF" id="PIRSF001604">
    <property type="entry name" value="LigA"/>
    <property type="match status" value="1"/>
</dbReference>
<dbReference type="SMART" id="SM00292">
    <property type="entry name" value="BRCT"/>
    <property type="match status" value="1"/>
</dbReference>
<dbReference type="SMART" id="SM00532">
    <property type="entry name" value="LIGANc"/>
    <property type="match status" value="1"/>
</dbReference>
<dbReference type="SUPFAM" id="SSF52113">
    <property type="entry name" value="BRCT domain"/>
    <property type="match status" value="1"/>
</dbReference>
<dbReference type="SUPFAM" id="SSF56091">
    <property type="entry name" value="DNA ligase/mRNA capping enzyme, catalytic domain"/>
    <property type="match status" value="1"/>
</dbReference>
<dbReference type="SUPFAM" id="SSF50249">
    <property type="entry name" value="Nucleic acid-binding proteins"/>
    <property type="match status" value="1"/>
</dbReference>
<dbReference type="SUPFAM" id="SSF47781">
    <property type="entry name" value="RuvA domain 2-like"/>
    <property type="match status" value="1"/>
</dbReference>
<dbReference type="PROSITE" id="PS50172">
    <property type="entry name" value="BRCT"/>
    <property type="match status" value="1"/>
</dbReference>
<dbReference type="PROSITE" id="PS01055">
    <property type="entry name" value="DNA_LIGASE_N1"/>
    <property type="match status" value="1"/>
</dbReference>
<dbReference type="PROSITE" id="PS01056">
    <property type="entry name" value="DNA_LIGASE_N2"/>
    <property type="match status" value="1"/>
</dbReference>
<proteinExistence type="inferred from homology"/>
<organism>
    <name type="scientific">Saccharopolyspora erythraea (strain ATCC 11635 / DSM 40517 / JCM 4748 / NBRC 13426 / NCIMB 8594 / NRRL 2338)</name>
    <dbReference type="NCBI Taxonomy" id="405948"/>
    <lineage>
        <taxon>Bacteria</taxon>
        <taxon>Bacillati</taxon>
        <taxon>Actinomycetota</taxon>
        <taxon>Actinomycetes</taxon>
        <taxon>Pseudonocardiales</taxon>
        <taxon>Pseudonocardiaceae</taxon>
        <taxon>Saccharopolyspora</taxon>
    </lineage>
</organism>
<gene>
    <name evidence="1" type="primary">ligA</name>
    <name type="ordered locus">SACE_6177</name>
</gene>